<name>LNRL_BACSU</name>
<keyword id="KW-0067">ATP-binding</keyword>
<keyword id="KW-0547">Nucleotide-binding</keyword>
<keyword id="KW-1185">Reference proteome</keyword>
<keyword id="KW-1278">Translocase</keyword>
<keyword id="KW-0813">Transport</keyword>
<gene>
    <name evidence="4" type="primary">lnrL</name>
    <name evidence="7" type="synonym">bifL</name>
    <name type="synonym">yfiL</name>
    <name type="ordered locus">BSU08310</name>
</gene>
<protein>
    <recommendedName>
        <fullName evidence="5">Linearmycin resistance ATP-binding protein LnrL</fullName>
        <ecNumber evidence="5">7.6.2.-</ecNumber>
    </recommendedName>
</protein>
<sequence length="311" mass="34050">MLQAENIKKAYGKKTIVKGISFSLKKGESFGLLGPNGAGKSTTISMISGLVPHDSGNITVGGYVIGKETAKAKQKIGIVPQEIALYPTLTAHENLMFWGKMYGLTHGEAKKRAAEVLEYVGLTERAKDKIETFSGGMKRRINIGAALMHKPELLIMDEPTVGIDPQSRNHILETVKQLNETGMTVIYTSHYMEEVEFLCDRIGIIDQGEMIAIGTKTDLCSRLGGDTIIQLTVSGINEAFLVAIRSLAHVNDVTVHELELKIDISAAHHEKVVTSLLAEATAHHINLLSLQVQEPNLERLFLNLTGRTLRD</sequence>
<comment type="function">
    <text evidence="2 3">Required for resistance to linearmycins, a family of antibiotic-specialized metabolites produced by some streptomycetes (PubMed:26647299, PubMed:28461449). Part of the ABC transporter complex LnrLMN that probably facilitates linearmycin removal from the membrane. Responsible for energy coupling to the transport system (PubMed:28461449). Also mediates KinC-dependent biofilm morphology (PubMed:28461449).</text>
</comment>
<comment type="subunit">
    <text evidence="6">The complex is composed of two ATP-binding proteins (LnrL) and two transmembrane proteins (LnrM and LnrN).</text>
</comment>
<comment type="induction">
    <text evidence="3">Induced in response to linearmycins and other polyenes via the two-component regulatory system LnrJ/LnrK.</text>
</comment>
<comment type="similarity">
    <text evidence="5">Belongs to the ABC transporter superfamily.</text>
</comment>
<organism>
    <name type="scientific">Bacillus subtilis (strain 168)</name>
    <dbReference type="NCBI Taxonomy" id="224308"/>
    <lineage>
        <taxon>Bacteria</taxon>
        <taxon>Bacillati</taxon>
        <taxon>Bacillota</taxon>
        <taxon>Bacilli</taxon>
        <taxon>Bacillales</taxon>
        <taxon>Bacillaceae</taxon>
        <taxon>Bacillus</taxon>
    </lineage>
</organism>
<proteinExistence type="evidence at protein level"/>
<dbReference type="EC" id="7.6.2.-" evidence="5"/>
<dbReference type="EMBL" id="D78508">
    <property type="protein sequence ID" value="BAA11402.1"/>
    <property type="molecule type" value="Genomic_DNA"/>
</dbReference>
<dbReference type="EMBL" id="AL009126">
    <property type="protein sequence ID" value="CAB12660.2"/>
    <property type="molecule type" value="Genomic_DNA"/>
</dbReference>
<dbReference type="PIR" id="G69803">
    <property type="entry name" value="G69803"/>
</dbReference>
<dbReference type="RefSeq" id="NP_388712.2">
    <property type="nucleotide sequence ID" value="NC_000964.3"/>
</dbReference>
<dbReference type="RefSeq" id="WP_003244346.1">
    <property type="nucleotide sequence ID" value="NZ_OZ025638.1"/>
</dbReference>
<dbReference type="SMR" id="P94440"/>
<dbReference type="FunCoup" id="P94440">
    <property type="interactions" value="715"/>
</dbReference>
<dbReference type="STRING" id="224308.BSU08310"/>
<dbReference type="TCDB" id="3.A.1.105.19">
    <property type="family name" value="the atp-binding cassette (abc) superfamily"/>
</dbReference>
<dbReference type="PaxDb" id="224308-BSU08310"/>
<dbReference type="EnsemblBacteria" id="CAB12660">
    <property type="protein sequence ID" value="CAB12660"/>
    <property type="gene ID" value="BSU_08310"/>
</dbReference>
<dbReference type="GeneID" id="936175"/>
<dbReference type="KEGG" id="bsu:BSU08310"/>
<dbReference type="PATRIC" id="fig|224308.179.peg.898"/>
<dbReference type="eggNOG" id="COG1131">
    <property type="taxonomic scope" value="Bacteria"/>
</dbReference>
<dbReference type="InParanoid" id="P94440"/>
<dbReference type="OrthoDB" id="9804819at2"/>
<dbReference type="PhylomeDB" id="P94440"/>
<dbReference type="BioCyc" id="BSUB:BSU08310-MONOMER"/>
<dbReference type="Proteomes" id="UP000001570">
    <property type="component" value="Chromosome"/>
</dbReference>
<dbReference type="GO" id="GO:0005524">
    <property type="term" value="F:ATP binding"/>
    <property type="evidence" value="ECO:0007669"/>
    <property type="project" value="UniProtKB-KW"/>
</dbReference>
<dbReference type="GO" id="GO:0016887">
    <property type="term" value="F:ATP hydrolysis activity"/>
    <property type="evidence" value="ECO:0007669"/>
    <property type="project" value="InterPro"/>
</dbReference>
<dbReference type="Gene3D" id="3.40.50.300">
    <property type="entry name" value="P-loop containing nucleotide triphosphate hydrolases"/>
    <property type="match status" value="1"/>
</dbReference>
<dbReference type="InterPro" id="IPR003593">
    <property type="entry name" value="AAA+_ATPase"/>
</dbReference>
<dbReference type="InterPro" id="IPR003439">
    <property type="entry name" value="ABC_transporter-like_ATP-bd"/>
</dbReference>
<dbReference type="InterPro" id="IPR017871">
    <property type="entry name" value="ABC_transporter-like_CS"/>
</dbReference>
<dbReference type="InterPro" id="IPR027417">
    <property type="entry name" value="P-loop_NTPase"/>
</dbReference>
<dbReference type="PANTHER" id="PTHR43582">
    <property type="entry name" value="LINEARMYCIN RESISTANCE ATP-BINDING PROTEIN LNRL"/>
    <property type="match status" value="1"/>
</dbReference>
<dbReference type="PANTHER" id="PTHR43582:SF2">
    <property type="entry name" value="LINEARMYCIN RESISTANCE ATP-BINDING PROTEIN LNRL"/>
    <property type="match status" value="1"/>
</dbReference>
<dbReference type="Pfam" id="PF00005">
    <property type="entry name" value="ABC_tran"/>
    <property type="match status" value="1"/>
</dbReference>
<dbReference type="SMART" id="SM00382">
    <property type="entry name" value="AAA"/>
    <property type="match status" value="1"/>
</dbReference>
<dbReference type="SUPFAM" id="SSF52540">
    <property type="entry name" value="P-loop containing nucleoside triphosphate hydrolases"/>
    <property type="match status" value="1"/>
</dbReference>
<dbReference type="PROSITE" id="PS00211">
    <property type="entry name" value="ABC_TRANSPORTER_1"/>
    <property type="match status" value="1"/>
</dbReference>
<dbReference type="PROSITE" id="PS50893">
    <property type="entry name" value="ABC_TRANSPORTER_2"/>
    <property type="match status" value="1"/>
</dbReference>
<accession>P94440</accession>
<accession>Q796Z7</accession>
<evidence type="ECO:0000255" key="1">
    <source>
        <dbReference type="PROSITE-ProRule" id="PRU00434"/>
    </source>
</evidence>
<evidence type="ECO:0000269" key="2">
    <source>
    </source>
</evidence>
<evidence type="ECO:0000269" key="3">
    <source>
    </source>
</evidence>
<evidence type="ECO:0000303" key="4">
    <source>
    </source>
</evidence>
<evidence type="ECO:0000305" key="5"/>
<evidence type="ECO:0000305" key="6">
    <source>
    </source>
</evidence>
<evidence type="ECO:0000312" key="7">
    <source>
        <dbReference type="EMBL" id="CAB12660.2"/>
    </source>
</evidence>
<feature type="chain" id="PRO_0000360194" description="Linearmycin resistance ATP-binding protein LnrL">
    <location>
        <begin position="1"/>
        <end position="311"/>
    </location>
</feature>
<feature type="domain" description="ABC transporter" evidence="1">
    <location>
        <begin position="2"/>
        <end position="232"/>
    </location>
</feature>
<feature type="binding site" evidence="1">
    <location>
        <begin position="34"/>
        <end position="41"/>
    </location>
    <ligand>
        <name>ATP</name>
        <dbReference type="ChEBI" id="CHEBI:30616"/>
    </ligand>
</feature>
<feature type="sequence conflict" description="In Ref. 1; BAA11402." evidence="5" ref="1">
    <original>G</original>
    <variation>D</variation>
    <location>
        <position position="107"/>
    </location>
</feature>
<reference key="1">
    <citation type="journal article" date="1996" name="Gene">
        <title>The Bacillus subtilis chromosome region near 78 degrees contains the genes encoding a new two-component system, three ABC transporters and a lipase.</title>
        <authorList>
            <person name="Yamamoto H."/>
            <person name="Uchiyama S."/>
            <person name="Sekiguchi J."/>
        </authorList>
    </citation>
    <scope>NUCLEOTIDE SEQUENCE [GENOMIC DNA]</scope>
    <source>
        <strain>168 / AC327</strain>
    </source>
</reference>
<reference key="2">
    <citation type="journal article" date="1997" name="Nature">
        <title>The complete genome sequence of the Gram-positive bacterium Bacillus subtilis.</title>
        <authorList>
            <person name="Kunst F."/>
            <person name="Ogasawara N."/>
            <person name="Moszer I."/>
            <person name="Albertini A.M."/>
            <person name="Alloni G."/>
            <person name="Azevedo V."/>
            <person name="Bertero M.G."/>
            <person name="Bessieres P."/>
            <person name="Bolotin A."/>
            <person name="Borchert S."/>
            <person name="Borriss R."/>
            <person name="Boursier L."/>
            <person name="Brans A."/>
            <person name="Braun M."/>
            <person name="Brignell S.C."/>
            <person name="Bron S."/>
            <person name="Brouillet S."/>
            <person name="Bruschi C.V."/>
            <person name="Caldwell B."/>
            <person name="Capuano V."/>
            <person name="Carter N.M."/>
            <person name="Choi S.-K."/>
            <person name="Codani J.-J."/>
            <person name="Connerton I.F."/>
            <person name="Cummings N.J."/>
            <person name="Daniel R.A."/>
            <person name="Denizot F."/>
            <person name="Devine K.M."/>
            <person name="Duesterhoeft A."/>
            <person name="Ehrlich S.D."/>
            <person name="Emmerson P.T."/>
            <person name="Entian K.-D."/>
            <person name="Errington J."/>
            <person name="Fabret C."/>
            <person name="Ferrari E."/>
            <person name="Foulger D."/>
            <person name="Fritz C."/>
            <person name="Fujita M."/>
            <person name="Fujita Y."/>
            <person name="Fuma S."/>
            <person name="Galizzi A."/>
            <person name="Galleron N."/>
            <person name="Ghim S.-Y."/>
            <person name="Glaser P."/>
            <person name="Goffeau A."/>
            <person name="Golightly E.J."/>
            <person name="Grandi G."/>
            <person name="Guiseppi G."/>
            <person name="Guy B.J."/>
            <person name="Haga K."/>
            <person name="Haiech J."/>
            <person name="Harwood C.R."/>
            <person name="Henaut A."/>
            <person name="Hilbert H."/>
            <person name="Holsappel S."/>
            <person name="Hosono S."/>
            <person name="Hullo M.-F."/>
            <person name="Itaya M."/>
            <person name="Jones L.-M."/>
            <person name="Joris B."/>
            <person name="Karamata D."/>
            <person name="Kasahara Y."/>
            <person name="Klaerr-Blanchard M."/>
            <person name="Klein C."/>
            <person name="Kobayashi Y."/>
            <person name="Koetter P."/>
            <person name="Koningstein G."/>
            <person name="Krogh S."/>
            <person name="Kumano M."/>
            <person name="Kurita K."/>
            <person name="Lapidus A."/>
            <person name="Lardinois S."/>
            <person name="Lauber J."/>
            <person name="Lazarevic V."/>
            <person name="Lee S.-M."/>
            <person name="Levine A."/>
            <person name="Liu H."/>
            <person name="Masuda S."/>
            <person name="Mauel C."/>
            <person name="Medigue C."/>
            <person name="Medina N."/>
            <person name="Mellado R.P."/>
            <person name="Mizuno M."/>
            <person name="Moestl D."/>
            <person name="Nakai S."/>
            <person name="Noback M."/>
            <person name="Noone D."/>
            <person name="O'Reilly M."/>
            <person name="Ogawa K."/>
            <person name="Ogiwara A."/>
            <person name="Oudega B."/>
            <person name="Park S.-H."/>
            <person name="Parro V."/>
            <person name="Pohl T.M."/>
            <person name="Portetelle D."/>
            <person name="Porwollik S."/>
            <person name="Prescott A.M."/>
            <person name="Presecan E."/>
            <person name="Pujic P."/>
            <person name="Purnelle B."/>
            <person name="Rapoport G."/>
            <person name="Rey M."/>
            <person name="Reynolds S."/>
            <person name="Rieger M."/>
            <person name="Rivolta C."/>
            <person name="Rocha E."/>
            <person name="Roche B."/>
            <person name="Rose M."/>
            <person name="Sadaie Y."/>
            <person name="Sato T."/>
            <person name="Scanlan E."/>
            <person name="Schleich S."/>
            <person name="Schroeter R."/>
            <person name="Scoffone F."/>
            <person name="Sekiguchi J."/>
            <person name="Sekowska A."/>
            <person name="Seror S.J."/>
            <person name="Serror P."/>
            <person name="Shin B.-S."/>
            <person name="Soldo B."/>
            <person name="Sorokin A."/>
            <person name="Tacconi E."/>
            <person name="Takagi T."/>
            <person name="Takahashi H."/>
            <person name="Takemaru K."/>
            <person name="Takeuchi M."/>
            <person name="Tamakoshi A."/>
            <person name="Tanaka T."/>
            <person name="Terpstra P."/>
            <person name="Tognoni A."/>
            <person name="Tosato V."/>
            <person name="Uchiyama S."/>
            <person name="Vandenbol M."/>
            <person name="Vannier F."/>
            <person name="Vassarotti A."/>
            <person name="Viari A."/>
            <person name="Wambutt R."/>
            <person name="Wedler E."/>
            <person name="Wedler H."/>
            <person name="Weitzenegger T."/>
            <person name="Winters P."/>
            <person name="Wipat A."/>
            <person name="Yamamoto H."/>
            <person name="Yamane K."/>
            <person name="Yasumoto K."/>
            <person name="Yata K."/>
            <person name="Yoshida K."/>
            <person name="Yoshikawa H.-F."/>
            <person name="Zumstein E."/>
            <person name="Yoshikawa H."/>
            <person name="Danchin A."/>
        </authorList>
    </citation>
    <scope>NUCLEOTIDE SEQUENCE [LARGE SCALE GENOMIC DNA]</scope>
    <source>
        <strain>168</strain>
    </source>
</reference>
<reference key="3">
    <citation type="journal article" date="2009" name="Microbiology">
        <title>From a consortium sequence to a unified sequence: the Bacillus subtilis 168 reference genome a decade later.</title>
        <authorList>
            <person name="Barbe V."/>
            <person name="Cruveiller S."/>
            <person name="Kunst F."/>
            <person name="Lenoble P."/>
            <person name="Meurice G."/>
            <person name="Sekowska A."/>
            <person name="Vallenet D."/>
            <person name="Wang T."/>
            <person name="Moszer I."/>
            <person name="Medigue C."/>
            <person name="Danchin A."/>
        </authorList>
    </citation>
    <scope>SEQUENCE REVISION TO 107</scope>
</reference>
<reference key="4">
    <citation type="journal article" date="2015" name="PLoS Genet.">
        <title>Escape from lethal bacterial competition through coupled activation of antibiotic resistance and a mobilized subpopulation.</title>
        <authorList>
            <person name="Stubbendieck R.M."/>
            <person name="Straight P.D."/>
        </authorList>
    </citation>
    <scope>FUNCTION</scope>
</reference>
<reference key="5">
    <citation type="journal article" date="2017" name="J. Bacteriol.">
        <title>Linearmycins activate a two-component signaling system involved in bacterial competition and biofilm morphology.</title>
        <authorList>
            <person name="Stubbendieck R.M."/>
            <person name="Straight P.D."/>
        </authorList>
    </citation>
    <scope>FUNCTION</scope>
    <scope>SUBUNIT</scope>
    <scope>INDUCTION</scope>
</reference>